<gene>
    <name type="primary">unc-89</name>
    <name type="ORF">C09D1.1</name>
</gene>
<sequence length="8081" mass="894252">MASRRQKQFDRKYSSYRKFTATEDVNYSTHSSRSSYRSESLTSRTDGRGRSTSSEIIAGSESRSYPVYIAIQDYTPDKEDVEAIPLEQGQIVEVLDKKNSVRWLVRTKARPPRSGWVPGSYFETPTEFYKQRRRTREIENVSLSDEQAALVKRDQVYHELLRSEEEFVSSLRTCVDDYIKVLDDPEVPEAVKKNREELTLNIPELYNFHANVMLKGLNYYSDDPGKVGQTFVRLEKDFESHVEFYKQYADTLKLLEEPEIKRFFEGLSAKNDAGASSFVDHVKEIADRMVQYQNYFKEFVKYSARAHGSSKSIQKALELVTTIPQRVHDLEFTNNLKQHPGDTGKLGRIIRHDAFQVWEGDEPPKLRYVFLFRNKIMFTEQDASTSPPSYTHYSSIRLDKYNIRQHTTDEDTIVLQPQEPGLPSFRIKPKDFETSEYVRKAWLRDIAEEQEKYAAERDAISMTATSEMTASSVDFDMNASDQQSEFSEWSGSRKSSLFPGPEEGGPPRKKVKSPPVISPTGSSTSIYSGGSSSIDWTTTGTTLEMQGTRVTRTQYGFRTLQESSAKMCLKVTGYPLPDITWYKDDVQLHEDERHTFYSDEDGFFAMTIDPVQVTDTGRYTCMATNEYGQASTSAFFRVLKVEKEAAPPAFVTKLRDKECKEGDVIDFECEVEGWPEPELVWLVDDQPLRPSHDFRLQYDGQTAKLEIRDAQPDDTGVYTVKIQNEFGSIESKAELFVQADPDKNHVAPEFQATIEYVECDEGEEVRFKSVITGDPNPEIIWFINGKPLSESEKVKFISEDGICILTIKDVTRHFDGMVTCQGSNRLGSASCDGRLKVRVPPAPPTFNKPLEDKTVQEKSTVVFEVDVSGWPEPTLTFTLCGKELKNGEEGVEIVGHDGFYRISIPNTSMDKHDGEIVAKAQNEHGTAESRARLTVEQEEEESRSAPTFLKDIEDQTVKTGEFAVFETTVRGNPNPEVTWFINGHKMDQGSPGVKIEAHNHDHKLTIDSAQYAGTVLCRAENAVGRFETKARLVVLAPEKQKKPPKFVEILVDKTETVDNTVVFEVRVEGEPKPTVTWYLKGEELKQSDRVEIREFDGSIKISIKNIKIEDAGEIRAVATNSEGSDETKAKLTVQKKPFAPEFDLRPVSLTVEKGSEAVFSAHAFGIPLPTYEWSVNGRKVRDGQEGARVTRDESTVDGASILTIDTATYYSEVNHLTISVVAENTLGAEETGAQLTIEPKKESVVVEKQDLSSSEVQKEIAQQVKEASPEATTTITMETSLTSTKTTTMSTTEVTSTVGGVTVETKESESESATTVIGGGSGGVTEGSISVSKIEVVSKTDSQTDVREGTPKRRVSFAEEELPKEVIDSDRKKKKSPSPDKKEKSPEKTEEKPASPTKKTGEEVKSPKEKSPASPTKKEKSPAAEEVKSPTKKEKSPSSPTKKEKSPSSPTKKTGDEVKEKSPPKSPTKKEKSPEKPEDVKSPVKKEKSPDATNIVEVSSETTIEKTETTMTTEMTHESEESRTSVKKEKTPEKVDEKPKSPTKKDKSPEKSITEEIKSPVKKEKSPEKVEEKPASPTKKEKSPEKPASPTKKSENEVKSPTKKEKSPEKSVVEELKSPKEKSPEKADDKPKSPTKKEKSPEKSATEDVKSPTKKEKSPEKVEEKPTSPTKKESSPTKKTDDEVKSPTKKEKSPQTVEEKPASPTKKEKSPEKSVVEEVKSPKEKSPEKAEEKPKSPTKKEKSPEKSAAEEVKSPTKKEKSPEKSAEEKPKSPTKKESSPVKMADDEVKSPTKKEKSPEKVEEKPASPTKKEKTPEKSAAEELKSPTKKEKSPSSPTKKTGDESKEKSPEKPEEKPKSPTPKKSPPGSPKKKKSKSPEAEKPPAPKLTRDLKLQTVNKTDLAHFEVVVEHATECKWFLDGKEITTAQGVTVSKDDQFEFRCSIDTTMFGSGTVSVVASNAAGSVETKTELKVLETPKETKKPEFTDKLRDMEVTKGDTVQMDVIALHSPLYKWYQNGNLLEDGKNGVTIKNEENKSSLIIPNAQDSGKITVEASNEVGSSESSAQLTVNPPSTTPIVVDGPKSVTIKETETAEFKATISGFPAPTVKWTINEKIVEESRTITTIKTEDVYTLKISNAKIEQTGTVKVTAQNSAGQDSKQADLKVEPNVKAPKFKSQLTDKVADEGEPLRWNLELDGPSPGTEVSWLLNGQPLTKSDTVQVVDHGDGTYHVTIAEAKPEMSGTLTAKAKNAAGECETSAKVTVNGGNKKPEFVQAPQNHETTLEESVKFSAIVTGKPMPNVTWYLNNKKLIQSEEVKVKYVHETGKTSIRIQKPLMEHNGTIRVEAENVSGKVQATAQLKVDKKTEVPKFTTNMDDRQVKEGEDVKFTANVEGYPEPSVAWTLNGEPVSKHPNITVTDKDGEHTIEISAVTPEQAGELSCEATNPVGSKKRDVQLAVKKVGDAPTFAKNLEDRLITEGELTLMDAKLNIVKPKPKITWLKDGVEITSDGHYKIVEEEDGSLKLSILQTKLEDKGRITIKAESEFGVAECSASLGVVKGRPMAKPAFQSDIAPINLTEGDTLECKLLITGDPTPFVKWYIGTQLVCATEDTEISNANGVYTMKIHGVTADMTGKIKCVAYNKAGEVSTEGPLKVVAPIPVEFETSLCDATCREGDTLKLRAVLLGEPEPVVSWYVNGKKLEESQNIKIHSEKGTYTVTIKDITCDYSGQVVCEAINEYGKATSEATLLVLPRGEPPDFLEWLSNVRARTGTKVVHKVVFTGDPKPSLTWYINNKEILNSDLYTIVTDDKTSTLTINSFNPDVHVGEIICKAENDAGEVSCTANMITYTSDMFSESESEAQAEEFVGDDLTEDESLREEMHRTPTPVMAPKFITKIKDTKAKKGHSAVFECVVPDTKGVCCKWLKDGKEIELIARIRVQTRTGPEGHITQELVLDNVTPEDAGKYTCIVENTAGKDTCEATLTVIESLEKKSEKKAPEFIVALQDKTTKTSEKVVLECKVIGEPKPKVSWLHDNKTITQESITVESVEGVERVTITSSELSHQGKYTCIAENTEGTSKTEAFLTVQGEAPVFTKELQNKELSIGEKLVLSCSVKGSPQPHVDFYSFSETTKVETKITSSSRIAIEHDQTNTHWRMVISQITKEDIVSYKAIATNSIGTATSTSKITTKVEAPVFEQGLKKTSVKEKEEIKMEVKVGGSAPDVEWFKDDKPVSEDGNHEMKKNPETGVFTLVVKQAATTDAGKYTAKASNPAGTAESSAEAEVTQSLEKPTFVRELVTTEVKINETATLSVTVKGVPDPSVEWLKDGQPVQTDSSHVIAKVEGSGSYSITIKDARLEDSGKYACRATNPAGEAKTEANFAVVKNLVPPEFVEKLSPLEVKEKESTTLSVKVVGTPEPSVEWFKDDTPISIDNVHVIQKQTAVGSFSLTINDARQGDVGIYSCRARNEAGEALTTANFGIIRDSIPPEFTQKLRPLEVREQETLDLKVTVIGTPVPNVEWFKDDKPINIDNSHIFAKDEGSGHHTLTIKQARGEDVGVYTCKATNEAGEAKTTANMAVQEEIEAPLFVQGLKPYEVEQGKPAELVVRVEGKPEPEVKWFKDGVPIAIDNQHVIEKKGENGSHTLVIKDTNNADFGKYTCQATNKAGKDETVGELKIPKYSFEKQTAEEVKPLFIEPLKETFAVEGDTVVLECKVNKESHPQIKFFKNDQPVEIGQHMQLEVLEDGNIKLTIQNAKKEDVGAYRCEAVNVAGKANTNADLKIQFAAKVEEHVTDESGQLEEIGQFETVGDTASSKTDTGRGAPEFVELLRSCTVTEKQQAILKCKVKGEPRPKIKWTKEGKEVEMSARVRAEHKDDGTLTLTFDNVTQADAGEYRCEAENEYGSAWTEGPIIVTLEGAPKIDGEAPDFLQPVKPAVVTVGETAVLEGKISGKPKPSVKWYKNGEELKPSDRVKIENLDDGTQRLTVTNAKLDDMDEYRCEASNEFGDVWSDVTLTVKEPAQVAPGFFKELSAIQVKETETAKFECKVSGTKPDVKWFKDGTPLKEDKRVHFESTDDGTQRLVIEDSKTDDQGNYRIEVSNDAGVANSKVPLTVVPSETLKIKKGLTDVNVTQGTKILLSVEVEGKPKTVKWYKGTETVTSSQTTKIVQVTESEYKLEIESAEMSDTGAYRVVLSTDSFSVESSATVTVTKAAEKISLPSFKKGLADQSVPKGTPLVLEVEIEGKPKDVKWYKNGDEIKDGKVEDLGNGKYRLTIPDFQEKDVGEYSVTAANEAGEIESKAKVNVSAKPEIVSGLVPTTVKQGETATFNVKVKGPVKGVKWYKNGKEIPDAKTKDNGDGSYSLEIPNAQVEDAADYKVVVSNDAGDADSSAALTVKLADDGKDKVKPEIVSGLIPTTVKQGETATFNVKVKGPVKQVKWYKNGKEIPNAKAKDNGDGSYSLEIPNAQLDDTADYKVVVSNDAGDADSSAALTVKLPGIAIVKGLEDAEVPKGKKAVLQVETNKKPKEIKWYKNGKEITPSDKAQPGSDGDNKPQLVIPDAGDDDAAEYKVVLTDEDGNTADSSCALTVKLPAKEPKIIKGLEDQVVSIGSPIKLEIETSGSPKTVKWYKNGKELPGAAAKTIKIQKIDDNKYVLEIPSSVVEDTGDYKVEVANEAGSANSSGKITVEPKITFLKPLKDQSITEGENAEFSVETNTKPRIVKWYKNGQEIKPNSRFIIEQKTDTKYQLVIKNAVRDDADTYKIVLENTAGEAESSAQLTVKKAKAGLCKIVKGLEDQVVAKGAKMVFEVKIQGEPEDVRWLRDANVISAGANAIIEKIDDTTYRLIIPSADLKDAGEYTVEVINESGKAKSDAKGEVDEKPEIVRGLENIEIPEGDDDVFKVEVSAPVRQVKWYKNDQEIKPNSHLEAKKIGPKKYELAINRAQLDDGADYKVVLSNAAGDCDSSAALTVVKPNVLKIVDGLKDVDVEEPQPVELKVKVEGIPKVIKWYKNGQELKPDADGFKFEEKPESGEFSLTIPSSKKSDGGAYRVVLGNDKGEVYSGSVVHVKSAKSSEPTSGANFLSPLKDTEVEEGDMLTLQCTIAGEPFPEVIWEKDGVVLQKDDRITMRVALDGTATLRIRSAKKSDIGQYRVTAKNEAGSATSDCKVTVTEQGEQPSKPKFVIPLKTGAALPGDKKEFNVKVRGLPKPTLQWFLNGIPIKFDDRITLDDMADGNYCLTIRDVREEDFGTLKCIAKNENGTDETVCEFQQGAGHDDGSRDDLRYPPRFNVPLWDRRIPVGDPMFIECHVDANPTAEVEWFKDGKKIEHTAHTEIRNTVDGACRIKIIPFEESDIGVYMCVAVNELGQAETQATYQVEILEHVEEEKRREYAPKINPPLEDKTVNGGQPIRLSCKVDAIPRASVVWYKDGLPLRADSRTSIQYEEDGTATLAINDSTEEDIGAYRCVATNAHGTINTSCSVNVKVPKQEVKKEGEEPFFTKGLVDLWADRGDSFTLKCAVTGDPFPEIKWYRNGQLLRNGPRTVIETSPDGSCSLTVNESTMSDEGIYRCEAENAHGKAKTQATAHVQMALGKTEKPKMDEGKPPKFILELSDMSVSLGNVIDLECKVTGLPNPSVKWSKDGGPLIEDSRFEWSNEASKGVYQLRIKNATVHDEGTYRCVATNENGSATTKSFVRMDDGLGSGVVTASQPPRFTLKMGDVRTTEGQPLKLECKVDASPLPEMVWYKDGAIVTPSDRIQISLSPDGVATLLIPSCVYDDDGIYRVIATNPSGTAQDKGTATVKKLPRDSGARRSADRDVFDANKAPKLMEPLENIRIPEKQSFRLRCKFSGDPKPTIKWFKDGERVFPYGRLQLIESPDGVCELVVDSATRQDAGGYRCVAENTYGSARTSCDVNVIRGDRKPRDIDSSIREGKAPGFTTPLTIRRAKPGDSVTFECLPFGNPFPSIKWLKDGLELFSDEKIKMEAAADGTQRLILSDVTFLSEGYFRCVATNEHGTASTKAELVIEGDRTIGSRPLPEVNGEPEECKPRIRRGLYNMSIHEGNVVEMIVCATGIPTPTVKWYKDGQEIVGDGPDGKRVIFTDERGIHHLVIVNASPDDEGEYSLEATNKLGSAKTEGSLNIIRPRHIADADERGGMPFPPGFVRQLKNKHVFNHMPTIFDCLVVGHPAPEVEWFHNGKKIVPGGRIKIQSCGGGSHALIILDTTLEDAGEYVATAKNSHGSASSSAVLDVTVPFLDSIKFNGEIDVTPYLTEEYGFKKLNTASLPTPPDRGPFIKEVTGHYLTLSWIPTKRAPPRYPQVTYVIEIRELPEKQWSLLEYNIPEPVCKVRNLELGKSYQFRVRAENIYGISDPSPASPPSRLMAPPQPVFDRRTNKVIPLLDPYAEKALDMRYSEQYACAPWFSPGVVEKRYCAENDTLTIVLNVSGFPDPDIKWKFRGWDIDTSSPTSKCKVYTYGGSETTLAITGFSKENVGQYQCFAKNDYGDAQQNIMVDLATRPNFIQPLVNKTFSSAQPMRMDVRVDGEPFPELKWMKEWRPIVESSRIKFVQDGPYLCSLIINDPMWRDSGIYSCVAVNDAGQATTSCTVTVEAEGDYNDVELPRRRVTIESRRVRELYEISEKDEKLAAEGAPFRVKEKATGREFLAQLRPIDDALMRHVDIHNSLDHPGIVQMHRVLRDEKLALVVFDNANSTIDGLSSLAHPGVEIAEPKGVNRETCVRVFVRQLLLALKHMHDLRIAHLDLRPETILLQDDKLKLADFGQARRLLRGLITGEIKGSPEFVSPEIVRSYPLTLATDMWSTGVLTYVLLTGLSPFHGDNDNETLANVDSCQFDSSPLGNFSYDAGDFVKKLLTEIPVSRLTVDEALDHPWINDEKLKTEPLSADTLREFKYQHKWLERRVFVQQTPSEQILEAILGPATAQAQQNAPVAPEGRRPAEIYDYLRIQPKKPPPTVEYVPQPRKEHPPFIDEFGQLIDGDAFDRPEGTGFEGPHRQPPQIPPQPQRPNQAAHDSRRHEQQPQHQGQPQRIPVDQYGRPLVDPRYLNDPSHRPSSLDDAPFYVDKYGNPVHFDKYGRPMAPQNLEKRKLIPQDKGETPSHSKKEKTQHPVATPILASPGGDQQQQKIPMRMIRGERREIEEEIANRILSDISEEGSIAGSLASLEDFEIPKDFQVEASEPSTPTLTPEVTIRETIPKPTPSPTSPQKSPVPQPQGLLIPAKVTYSDSILAGLPAADKKVLEDAENDPSIPVGAPLFLEGLHGSDLTIDTTSASGLIKVTSPAINLSPNPKSPRRSTPGTKSPVVLSPRQEHSMEVLIATKRGKPGFLPPGELAEDIDDEDAFMDDRKKQVKPKDHDGENDFKDEKERLEKDKNRRTVNLDDLDKYRPSAFYKDDSDFGHPGYDIDATPWDSHYQIGPDTYLMAARGAAFNSRVRNYREELFGMGAPTVKQGFLGVRNRDITVRERRRYTDILRETTQGLEPKSHEQSTALLQKAPSATAIERIKADIEKVTPCATKKNDDGTFAPIFTARLRDVYLRKNQPAIFECAVSASPAPKVTWDFQGKILESNDRVTIEQDNNVARLILNHAAPYDLGEYVCTAINEYGTDKSSCRLISGETPSRPGRPEAELSSDTEIFIQWEAPEGPTYLEGITYRLEYRVAGPNDHGDPWITVSEKIDDESVIVKHLSPLGIYQFRVTAQNGFGLGLPSLSSRIVQTHGKGAPKLQIDVLKSEIRLNVVSMPQKSTNQLGGISEESEEDSEARTANEDMKSNLQLQTDDPTGRFQIGGLKFKGRFSVIRDAVDSTTEGHAHCAVKIRHPSSEAISEYESLRDGQHENVQRLIAAFNNSNFLYLLSERLYEDVFSRFVFNDYYTEEQVALTMRQVTSALHFLHFKGIAHLDVNPHNIMFQSKRSWVVKLVDFGRAQKVSGAVKPVDFDTKWASPEFHIPETPVTVQSDMWGMGVVTFCLLAGFHPFTSEYDREEEIKENVINVKCDPNLIPVNASQECLSFATWALKKSPVRRMRTDEALSHKFLSSDPSMVRRRESIKYSASRLRKLAAMIRQPTFSQPISEELESKYGK</sequence>
<protein>
    <recommendedName>
        <fullName>Muscle M-line assembly protein unc-89</fullName>
    </recommendedName>
    <alternativeName>
        <fullName evidence="22">Inactive serine/threonine-protein kinase unc-89</fullName>
    </alternativeName>
    <alternativeName>
        <fullName evidence="22">Obscurin</fullName>
    </alternativeName>
    <alternativeName>
        <fullName>Uncoordinated protein 89</fullName>
    </alternativeName>
</protein>
<accession>O01761</accession>
<accession>Q17362</accession>
<accession>Q5W614</accession>
<accession>Q5W615</accession>
<accession>Q5W616</accession>
<accession>Q5W617</accession>
<accession>Q646H5</accession>
<accession>Q64EQ8</accession>
<accession>Q7Z119</accession>
<accession>Q7Z120</accession>
<comment type="function">
    <text evidence="9 10 13 15 16 17 18 19 20">Structural component of the muscle M line which is involved in assembly and organization of sarcomere myofilaments (PubMed:15313609, PubMed:16453163, PubMed:18801371, PubMed:22621901, PubMed:23283987, PubMed:27009202). The large isoform a, isoform b, isoform d and isoform f play an essential role in maintaining the organization of sarcomeres but not myofilament alignment during body wall muscle development whereas the small isoform c and isoform d appear to have a minor role (PubMed:15313609, PubMed:16453163, PubMed:22768340). Isoform b and isoform f are required for the organization of unc-15/paramyosin into sarcomere thick filaments in body wall muscles (PubMed:27009202). By binding mel-26, a substrate adapter of the cul-3 E3 ubiquitin-protein ligase complex, regulates the organization of myosin thick filaments, likely by preventing the degradation of microtubule severing protein mei-1 (PubMed:22621901). Acts as a guanine nucleotide exchange factor (GEF) for Rho GTPase rho-1 but not ced-10, mig-2 and cdc-42 (PubMed:18801371). The large isoforms regulate Ca(2+) signaling during muscle contraction by ensuring the correct localization of sarco-endoplamic reticulum Ca(2+) ATPase sca-1 and ryanodine receptor unc-68 (PubMed:22768340). By controlling the contraction and/or organization of pharyngeal muscles, plays a role in the formation of pharyngeal gland cell extension (PubMed:21868609).</text>
</comment>
<comment type="subunit">
    <text evidence="12 13 14 16 18 19">May interact (via fibronectin type-III domain 1, Ig-like C2-type domain 48/49 and protein kinase domain 1 or C-terminus of the interkinase region) with lim-9 (via LIM zinc-binding domain) (PubMed:19244614). May interact (via fibronectin type-III domain 1, Ig-like C2-type domain 48/49 and kinase protein domain 1 or Ig-like C2-type domain 50, fibronectin type-III domain 2 and kinase protein domain 2) with scpl-1 isoforms a and b (via FCP1 homology domain); the interaction may act as a molecular bridge to bring two unc-89 molecules together or to stabilize a loop between the 2 kinase domains (PubMed:18337465, PubMed:19244614). May interact (via SH3 domain) with unc-15 (PubMed:27009202). May interact (via Ig-like C2-type domain 1-3) with cpna-1 (via VWFA domain) (PubMed:23283987). May interact (via Ig-like C2-type domain 2/3 and, Ig-like C2-type domain 50 and fibronectin type-III domain 2) with mel-26 (via MATH domain) (PubMed:22621901). May interact (via DH and PH domains) with rho-1, ced-10, mig-2 and cdc-42 (PubMed:18801371).</text>
</comment>
<comment type="subcellular location">
    <subcellularLocation>
        <location evidence="9 12 14 16 17 18 19 20">Cytoplasm</location>
        <location evidence="9 12 14 16 17 18 19 20">Myofibril</location>
        <location evidence="9 12 14 16 17 18 19 20">Sarcomere</location>
        <location evidence="9 12 14 16 17 18 19 20">M line</location>
    </subcellularLocation>
    <text evidence="11 14 16 18">Colocalizes with scpl-1 (isoform b) to the M line (PubMed:19244614). Colocalizes with cpna-1 to the M line (PubMed:23283987). Colocalizes with mel-26 to the M line (PubMed:22621901). Accumulates at the center of thick myofilaments in M line-like structures in myoepithelial sheath cells (PubMed:17326220).</text>
</comment>
<comment type="alternative products">
    <event type="alternative splicing"/>
    <isoform>
        <id>O01761-1</id>
        <name>b</name>
        <sequence type="displayed"/>
    </isoform>
    <isoform>
        <id>O01761-2</id>
        <name>a</name>
        <sequence type="described" ref="VSP_015545"/>
    </isoform>
    <isoform>
        <id>O01761-3</id>
        <name>c</name>
        <sequence type="described" ref="VSP_015541 VSP_015547"/>
    </isoform>
    <isoform>
        <id>O01761-4</id>
        <name>d</name>
        <sequence type="described" ref="VSP_015542 VSP_015546"/>
    </isoform>
    <isoform>
        <id>O01761-5</id>
        <name>e</name>
        <sequence type="described" ref="VSP_015543 VSP_015545"/>
    </isoform>
    <isoform>
        <id>O01761-6</id>
        <name>f</name>
        <sequence type="described" ref="VSP_015543"/>
    </isoform>
    <isoform>
        <id>O01761-7</id>
        <name>g</name>
        <sequence type="described" ref="VSP_015544 VSP_015548 VSP_015549"/>
    </isoform>
</comment>
<comment type="tissue specificity">
    <text evidence="9 11 12 14 16 17 18 19 20">Expressed in body-wall, pharyngeal muscles and a few muscle cells of the tail (at protein level) (PubMed:18337465, PubMed:19244614, PubMed:22621901, PubMed:22768340, PubMed:23283987, PubMed:27009202, PubMed:8603916). Expressed in gonadal myoepithelial sheath cells (at protein level) (PubMed:17326220). Isoform c: Expressed in body wall and vulval muscles but not in pharyngeal muscles (PubMed:15313609). Isoform d: Specifically expressed in vulval, intestinal, anal depressor and anal sphincter muscles (PubMed:15313609).</text>
</comment>
<comment type="developmental stage">
    <text evidence="9 18">Expressed in embryos (PubMed:23283987). Isoform a: Expressed in embryo, throughout larval development and in adults (PubMed:15313609). Isoform b: Expressed in embryo, throughout larval development and in adults and is one of the most abundant (PubMed:15313609). Isoform c: Expressed in embryo, throughout larval development and in adults and is one of the most abundant (PubMed:15313609). Isoform d: Expressed in embryo, throughout larval development and in adults (PubMed:15313609).</text>
</comment>
<comment type="domain">
    <text evidence="4 19 21">Protein kinase domains 1 and 2 are predicted to be catalytically inactive (PubMed:16453163). The two kinase domains are required for the organization of thick filament component myosin heavy chain myo-3 but not of myosin heavy chain unc-54 and unc-15/paramyosin (PubMed:27009202).</text>
</comment>
<comment type="domain">
    <text evidence="19">The SH3 domain is required for the organization of thick filament components myosin heavy chain unc-54 and myo-3 and unc-15/paramyosin.</text>
</comment>
<comment type="domain">
    <text evidence="8">The PH domain does not bind inositol 1,4,5-trisphosphate. The PH domain has an unusual closed conformation of the lipid binding site which is lined by negative charged amino acids which probably prevents binding to membrane lipids.</text>
</comment>
<comment type="disruption phenotype">
    <text evidence="9 10 11 13 16 17 19">Mutants lacking isoform a, isoform b, isoform e and isoform f have an abnormal organization of the myofilament lattice of body wall and pharyngeal muscles (PubMed:16453163, PubMed:18801371, PubMed:22621901, PubMed:27009202). In body wall muscles, unc-15/paramyosin accumulates in large foci outside thick filaments and myosin heavy chains unc-54 and myo-3 fail to assemble into parallel myofibrils (PubMed:27009202). In addition, myosin thick filaments are disorganized with the formation of abnormal myosin heavy chain myo-3 aggregates and V-shaped crossing of A bands (PubMed:18801371, PubMed:22621901). In mutants lacking isoform b, isoform c, isoform d and isoform f, myo-3 fails to assemble into parallel myofibrils whereas unc-54 and unc-15 localization is normal (PubMed:27009202). Mutants lacking isoform b, isoform c, isoform d and isoform f have defects only in body wall muscle structure (PubMed:16453163). RNAi-mediated knockdown of isoform a or isoform b, isoform c and isoform d causes similar defects in the organization although RNAi-mediated knockdown of isoform c causes a less severe defect in myofilament organization (PubMed:15313609). In mutants lacking isoform a, isoform b, isoform e and isoform f, mei-1 protein levels are decreased by 20 percent (PubMed:22621901). RNAi-mediated knockdown of isoform a, isoform b, isoform e and isoform f but not of isoforms c and d disrupts sca-1 localization to linear punctate structures along in the M line in body wall muscles (PubMed:22768340). RNAi-mediated knockdown has no effect on ovulation (PubMed:17326220).</text>
</comment>
<comment type="similarity">
    <text evidence="22">Belongs to the protein kinase superfamily. CAMK Ser/Thr protein kinase family.</text>
</comment>
<comment type="caution">
    <text evidence="22 23">In contrast to obscurins in other species, unlikely to have serine/threonine kinase activity as both protein kinase domains are predicted to be catalytically inactive. The Lys residue involved in ATP binding is not conserved in both kinase domains.</text>
</comment>
<proteinExistence type="evidence at protein level"/>
<name>UNC89_CAEEL</name>
<organism>
    <name type="scientific">Caenorhabditis elegans</name>
    <dbReference type="NCBI Taxonomy" id="6239"/>
    <lineage>
        <taxon>Eukaryota</taxon>
        <taxon>Metazoa</taxon>
        <taxon>Ecdysozoa</taxon>
        <taxon>Nematoda</taxon>
        <taxon>Chromadorea</taxon>
        <taxon>Rhabditida</taxon>
        <taxon>Rhabditina</taxon>
        <taxon>Rhabditomorpha</taxon>
        <taxon>Rhabditoidea</taxon>
        <taxon>Rhabditidae</taxon>
        <taxon>Peloderinae</taxon>
        <taxon>Caenorhabditis</taxon>
    </lineage>
</organism>
<keyword id="KW-0002">3D-structure</keyword>
<keyword id="KW-0025">Alternative splicing</keyword>
<keyword id="KW-0963">Cytoplasm</keyword>
<keyword id="KW-1015">Disulfide bond</keyword>
<keyword id="KW-0393">Immunoglobulin domain</keyword>
<keyword id="KW-0514">Muscle protein</keyword>
<keyword id="KW-1185">Reference proteome</keyword>
<keyword id="KW-0677">Repeat</keyword>
<keyword id="KW-0728">SH3 domain</keyword>
<feature type="chain" id="PRO_0000072704" description="Muscle M-line assembly protein unc-89">
    <location>
        <begin position="1"/>
        <end position="8081"/>
    </location>
</feature>
<feature type="domain" description="SH3" evidence="5">
    <location>
        <begin position="63"/>
        <end position="127"/>
    </location>
</feature>
<feature type="domain" description="DH" evidence="1">
    <location>
        <begin position="152"/>
        <end position="330"/>
    </location>
</feature>
<feature type="domain" description="PH" evidence="3">
    <location>
        <begin position="342"/>
        <end position="498"/>
    </location>
</feature>
<feature type="domain" description="Ig-like C2-type 1">
    <location>
        <begin position="547"/>
        <end position="633"/>
    </location>
</feature>
<feature type="domain" description="Ig-like C2-type 2">
    <location>
        <begin position="648"/>
        <end position="736"/>
    </location>
</feature>
<feature type="domain" description="Ig-like C2-type 3">
    <location>
        <begin position="748"/>
        <end position="838"/>
    </location>
</feature>
<feature type="domain" description="Ig-like C2-type 4">
    <location>
        <begin position="946"/>
        <end position="1033"/>
    </location>
</feature>
<feature type="domain" description="Ig-like C2-type 5">
    <location>
        <begin position="1044"/>
        <end position="1132"/>
    </location>
</feature>
<feature type="domain" description="Ig-like C2-type 6">
    <location>
        <begin position="1140"/>
        <end position="1227"/>
    </location>
</feature>
<feature type="domain" description="RCSD 1" evidence="22">
    <location>
        <begin position="1375"/>
        <end position="1475"/>
    </location>
</feature>
<feature type="domain" description="RCSD 2" evidence="22">
    <location>
        <begin position="1479"/>
        <end position="1585"/>
    </location>
</feature>
<feature type="domain" description="RCSD 3" evidence="22">
    <location>
        <begin position="1597"/>
        <end position="1695"/>
    </location>
</feature>
<feature type="domain" description="RCSD 4" evidence="22">
    <location>
        <begin position="1700"/>
        <end position="1799"/>
    </location>
</feature>
<feature type="domain" description="Ig-like C2-type 7">
    <location>
        <begin position="1982"/>
        <end position="2067"/>
    </location>
</feature>
<feature type="domain" description="Ig-like C2-type 8">
    <location>
        <begin position="2071"/>
        <end position="2163"/>
    </location>
</feature>
<feature type="domain" description="Ig-like C2-type 9">
    <location>
        <begin position="2171"/>
        <end position="2261"/>
    </location>
</feature>
<feature type="domain" description="Ig-like C2-type 10">
    <location>
        <begin position="2269"/>
        <end position="2359"/>
    </location>
</feature>
<feature type="domain" description="Ig-like C2-type 11">
    <location>
        <begin position="2367"/>
        <end position="2455"/>
    </location>
</feature>
<feature type="domain" description="Ig-like C2-type 12">
    <location>
        <begin position="2463"/>
        <end position="2564"/>
    </location>
</feature>
<feature type="domain" description="Ig-like C2-type 13">
    <location>
        <begin position="2563"/>
        <end position="2651"/>
    </location>
</feature>
<feature type="domain" description="Ig-like C2-type 14">
    <location>
        <begin position="2657"/>
        <end position="2746"/>
    </location>
</feature>
<feature type="domain" description="Ig-like C2-type 15">
    <location>
        <begin position="2754"/>
        <end position="2858"/>
    </location>
</feature>
<feature type="domain" description="Ig-like C2-type 16">
    <location>
        <begin position="2887"/>
        <end position="2980"/>
    </location>
</feature>
<feature type="domain" description="Ig-like C2-type 17">
    <location>
        <begin position="2994"/>
        <end position="3081"/>
    </location>
</feature>
<feature type="domain" description="Ig-like C2-type 18">
    <location>
        <begin position="3087"/>
        <end position="3183"/>
    </location>
</feature>
<feature type="domain" description="Ig-like C2-type 19">
    <location>
        <begin position="3189"/>
        <end position="3280"/>
    </location>
</feature>
<feature type="domain" description="Ig-like C2-type 20">
    <location>
        <begin position="3286"/>
        <end position="3376"/>
    </location>
</feature>
<feature type="domain" description="Ig-like C2-type 21">
    <location>
        <begin position="3384"/>
        <end position="3469"/>
    </location>
</feature>
<feature type="domain" description="Ig-like C2-type 22">
    <location>
        <begin position="3482"/>
        <end position="3572"/>
    </location>
</feature>
<feature type="domain" description="Ig-like C2-type 23">
    <location>
        <begin position="3580"/>
        <end position="3667"/>
    </location>
</feature>
<feature type="domain" description="Ig-like C2-type 24">
    <location>
        <begin position="3686"/>
        <end position="3777"/>
    </location>
</feature>
<feature type="domain" description="Ig-like C2-type 25">
    <location>
        <begin position="3817"/>
        <end position="3908"/>
    </location>
</feature>
<feature type="domain" description="Ig-like C2-type 26">
    <location>
        <begin position="3920"/>
        <end position="4009"/>
    </location>
</feature>
<feature type="domain" description="Ig-like C2-type 27">
    <location>
        <begin position="4018"/>
        <end position="4106"/>
    </location>
</feature>
<feature type="domain" description="Ig-like C2-type 28">
    <location>
        <begin position="4109"/>
        <end position="4201"/>
    </location>
</feature>
<feature type="domain" description="Ig-like C2-type 29">
    <location>
        <begin position="4212"/>
        <end position="4297"/>
    </location>
</feature>
<feature type="domain" description="Ig-like C2-type 30">
    <location>
        <begin position="4302"/>
        <end position="4387"/>
    </location>
</feature>
<feature type="domain" description="Ig-like C2-type 31">
    <location>
        <begin position="4400"/>
        <end position="4485"/>
    </location>
</feature>
<feature type="domain" description="Ig-like C2-type 32">
    <location>
        <begin position="4489"/>
        <end position="4580"/>
    </location>
</feature>
<feature type="domain" description="Ig-like C2-type 33">
    <location>
        <begin position="4588"/>
        <end position="4678"/>
    </location>
</feature>
<feature type="domain" description="Ig-like C2-type 34">
    <location>
        <begin position="4681"/>
        <end position="4771"/>
    </location>
</feature>
<feature type="domain" description="Ig-like C2-type 35">
    <location>
        <begin position="4873"/>
        <end position="4961"/>
    </location>
</feature>
<feature type="domain" description="Ig-like C2-type 36">
    <location>
        <begin position="4965"/>
        <end position="5057"/>
    </location>
</feature>
<feature type="domain" description="Ig-like C2-type 37">
    <location>
        <begin position="5067"/>
        <end position="5160"/>
    </location>
</feature>
<feature type="domain" description="Ig-like C2-type 38">
    <location>
        <begin position="5171"/>
        <end position="5260"/>
    </location>
</feature>
<feature type="domain" description="Ig-like C2-type 39">
    <location>
        <begin position="5277"/>
        <end position="5366"/>
    </location>
</feature>
<feature type="domain" description="Ig-like C2-type 40">
    <location>
        <begin position="5383"/>
        <end position="5472"/>
    </location>
</feature>
<feature type="domain" description="Ig-like C2-type 41">
    <location>
        <begin position="5487"/>
        <end position="5578"/>
    </location>
</feature>
<feature type="domain" description="Ig-like C2-type 42">
    <location>
        <begin position="5595"/>
        <end position="5685"/>
    </location>
</feature>
<feature type="domain" description="Ig-like C2-type 43">
    <location>
        <begin position="5701"/>
        <end position="5790"/>
    </location>
</feature>
<feature type="domain" description="Ig-like C2-type 44">
    <location>
        <begin position="5815"/>
        <end position="5904"/>
    </location>
</feature>
<feature type="domain" description="Ig-like C2-type 45">
    <location>
        <begin position="5925"/>
        <end position="6014"/>
    </location>
</feature>
<feature type="domain" description="Ig-like C2-type 46">
    <location>
        <begin position="6038"/>
        <end position="6130"/>
    </location>
</feature>
<feature type="domain" description="Ig-like C2-type 47">
    <location>
        <begin position="6150"/>
        <end position="6239"/>
    </location>
</feature>
<feature type="domain" description="Fibronectin type-III 1" evidence="6">
    <location>
        <begin position="6278"/>
        <end position="6374"/>
    </location>
</feature>
<feature type="domain" description="Ig-like C2-type 48">
    <location>
        <begin position="6413"/>
        <end position="6502"/>
    </location>
</feature>
<feature type="domain" description="Ig-like C2-type 49">
    <location>
        <begin position="6507"/>
        <end position="6596"/>
    </location>
</feature>
<feature type="domain" description="Protein kinase 1" evidence="4">
    <location>
        <begin position="6592"/>
        <end position="6878"/>
    </location>
</feature>
<feature type="domain" description="Ig-like C2-type 50">
    <location>
        <begin position="7528"/>
        <end position="7617"/>
    </location>
</feature>
<feature type="domain" description="Fibronectin type-III 2" evidence="6">
    <location>
        <begin position="7623"/>
        <end position="7721"/>
    </location>
</feature>
<feature type="domain" description="Protein kinase 2" evidence="4">
    <location>
        <begin position="7785"/>
        <end position="8035"/>
    </location>
</feature>
<feature type="region of interest" description="Disordered" evidence="7">
    <location>
        <begin position="24"/>
        <end position="57"/>
    </location>
</feature>
<feature type="region of interest" description="Disordered" evidence="7">
    <location>
        <begin position="479"/>
        <end position="531"/>
    </location>
</feature>
<feature type="region of interest" description="Disordered" evidence="7">
    <location>
        <begin position="1283"/>
        <end position="1892"/>
    </location>
</feature>
<feature type="region of interest" description="Disordered" evidence="7">
    <location>
        <begin position="4525"/>
        <end position="4553"/>
    </location>
</feature>
<feature type="region of interest" description="Disordered" evidence="7">
    <location>
        <begin position="6954"/>
        <end position="7130"/>
    </location>
</feature>
<feature type="region of interest" description="Disordered" evidence="7">
    <location>
        <begin position="7177"/>
        <end position="7217"/>
    </location>
</feature>
<feature type="region of interest" description="Disordered" evidence="7">
    <location>
        <begin position="7284"/>
        <end position="7311"/>
    </location>
</feature>
<feature type="region of interest" description="Disordered" evidence="7">
    <location>
        <begin position="7324"/>
        <end position="7343"/>
    </location>
</feature>
<feature type="region of interest" description="Disordered" evidence="7">
    <location>
        <begin position="7348"/>
        <end position="7372"/>
    </location>
</feature>
<feature type="region of interest" description="Disordered" evidence="7">
    <location>
        <begin position="7746"/>
        <end position="7773"/>
    </location>
</feature>
<feature type="compositionally biased region" description="Low complexity" evidence="7">
    <location>
        <begin position="28"/>
        <end position="54"/>
    </location>
</feature>
<feature type="compositionally biased region" description="Polar residues" evidence="7">
    <location>
        <begin position="479"/>
        <end position="495"/>
    </location>
</feature>
<feature type="compositionally biased region" description="Low complexity" evidence="7">
    <location>
        <begin position="518"/>
        <end position="531"/>
    </location>
</feature>
<feature type="compositionally biased region" description="Low complexity" evidence="7">
    <location>
        <begin position="1283"/>
        <end position="1303"/>
    </location>
</feature>
<feature type="compositionally biased region" description="Low complexity" evidence="7">
    <location>
        <begin position="1326"/>
        <end position="1335"/>
    </location>
</feature>
<feature type="compositionally biased region" description="Basic and acidic residues" evidence="7">
    <location>
        <begin position="1336"/>
        <end position="1351"/>
    </location>
</feature>
<feature type="compositionally biased region" description="Basic and acidic residues" evidence="7">
    <location>
        <begin position="1361"/>
        <end position="1446"/>
    </location>
</feature>
<feature type="compositionally biased region" description="Basic and acidic residues" evidence="7">
    <location>
        <begin position="1453"/>
        <end position="1490"/>
    </location>
</feature>
<feature type="compositionally biased region" description="Basic and acidic residues" evidence="7">
    <location>
        <begin position="1515"/>
        <end position="1585"/>
    </location>
</feature>
<feature type="compositionally biased region" description="Basic and acidic residues" evidence="7">
    <location>
        <begin position="1592"/>
        <end position="1832"/>
    </location>
</feature>
<feature type="compositionally biased region" description="Basic and acidic residues" evidence="7">
    <location>
        <begin position="1839"/>
        <end position="1857"/>
    </location>
</feature>
<feature type="compositionally biased region" description="Pro residues" evidence="7">
    <location>
        <begin position="1858"/>
        <end position="1868"/>
    </location>
</feature>
<feature type="compositionally biased region" description="Basic and acidic residues" evidence="7">
    <location>
        <begin position="1875"/>
        <end position="1892"/>
    </location>
</feature>
<feature type="compositionally biased region" description="Pro residues" evidence="7">
    <location>
        <begin position="6999"/>
        <end position="7009"/>
    </location>
</feature>
<feature type="compositionally biased region" description="Basic and acidic residues" evidence="7">
    <location>
        <begin position="7087"/>
        <end position="7110"/>
    </location>
</feature>
<feature type="compositionally biased region" description="Pro residues" evidence="7">
    <location>
        <begin position="7200"/>
        <end position="7215"/>
    </location>
</feature>
<feature type="compositionally biased region" description="Polar residues" evidence="7">
    <location>
        <begin position="7284"/>
        <end position="7302"/>
    </location>
</feature>
<feature type="compositionally biased region" description="Basic and acidic residues" evidence="7">
    <location>
        <begin position="7762"/>
        <end position="7771"/>
    </location>
</feature>
<feature type="disulfide bond" evidence="2 22">
    <location>
        <begin position="568"/>
        <end position="621"/>
    </location>
</feature>
<feature type="disulfide bond" evidence="2">
    <location>
        <begin position="2582"/>
        <end position="2635"/>
    </location>
</feature>
<feature type="disulfide bond" evidence="2">
    <location>
        <begin position="2908"/>
        <end position="2964"/>
    </location>
</feature>
<feature type="disulfide bond" evidence="2 22">
    <location>
        <begin position="3015"/>
        <end position="3065"/>
    </location>
</feature>
<feature type="disulfide bond" evidence="2 22">
    <location>
        <begin position="3707"/>
        <end position="3759"/>
    </location>
</feature>
<feature type="disulfide bond" evidence="2">
    <location>
        <begin position="3838"/>
        <end position="3890"/>
    </location>
</feature>
<feature type="disulfide bond" evidence="2 22">
    <location>
        <begin position="5298"/>
        <end position="5350"/>
    </location>
</feature>
<feature type="disulfide bond" evidence="2">
    <location>
        <begin position="5404"/>
        <end position="5456"/>
    </location>
</feature>
<feature type="disulfide bond" evidence="2 22">
    <location>
        <begin position="5508"/>
        <end position="5560"/>
    </location>
</feature>
<feature type="disulfide bond" evidence="2 22">
    <location>
        <begin position="5616"/>
        <end position="5669"/>
    </location>
</feature>
<feature type="disulfide bond" evidence="2">
    <location>
        <begin position="5836"/>
        <end position="5888"/>
    </location>
</feature>
<feature type="disulfide bond" evidence="2 22">
    <location>
        <begin position="5946"/>
        <end position="5998"/>
    </location>
</feature>
<feature type="disulfide bond" evidence="2">
    <location>
        <begin position="7549"/>
        <end position="7600"/>
    </location>
</feature>
<feature type="splice variant" id="VSP_015541" description="In isoform c." evidence="22">
    <location>
        <begin position="1"/>
        <end position="6688"/>
    </location>
</feature>
<feature type="splice variant" id="VSP_015542" description="In isoform d." evidence="22">
    <location>
        <begin position="1"/>
        <end position="6685"/>
    </location>
</feature>
<feature type="splice variant" id="VSP_015543" description="In isoform e and isoform f." evidence="22">
    <location>
        <begin position="1241"/>
        <end position="1880"/>
    </location>
</feature>
<feature type="splice variant" id="VSP_015544" description="In isoform g." evidence="22">
    <location>
        <begin position="6632"/>
        <end position="6695"/>
    </location>
</feature>
<feature type="splice variant" id="VSP_015545" description="In isoform a and isoform e." evidence="22">
    <location>
        <begin position="6633"/>
        <end position="8081"/>
    </location>
</feature>
<feature type="splice variant" id="VSP_015546" description="In isoform d." evidence="22">
    <original>DEKLALVVFDN</original>
    <variation>MFRLVEDCELC</variation>
    <location>
        <begin position="6686"/>
        <end position="6696"/>
    </location>
</feature>
<feature type="splice variant" id="VSP_015547" description="In isoform c." evidence="22">
    <original>LALVVFDN</original>
    <variation>MVRFTINC</variation>
    <location>
        <begin position="6689"/>
        <end position="6696"/>
    </location>
</feature>
<feature type="splice variant" id="VSP_015548" description="In isoform g." evidence="22">
    <original>DFQVEASEPSTP</original>
    <variation>VTEGDGCNMCGE</variation>
    <location>
        <begin position="7175"/>
        <end position="7186"/>
    </location>
</feature>
<feature type="splice variant" id="VSP_015549" description="In isoform g." evidence="22">
    <location>
        <begin position="7187"/>
        <end position="8081"/>
    </location>
</feature>
<feature type="sequence conflict" description="In Ref. 1; AAB00542." evidence="22" ref="1">
    <original>A</original>
    <variation>P</variation>
    <location>
        <position position="2137"/>
    </location>
</feature>
<feature type="sequence conflict" description="In Ref. 1; AAB00542." evidence="22" ref="1">
    <original>AKA</original>
    <variation>PKP</variation>
    <location>
        <begin position="2245"/>
        <end position="2247"/>
    </location>
</feature>
<feature type="sequence conflict" description="In Ref. 1; AAB00542." evidence="22" ref="1">
    <original>A</original>
    <variation>P</variation>
    <location>
        <position position="2258"/>
    </location>
</feature>
<feature type="sequence conflict" description="In Ref. 1; AAB00542." evidence="22" ref="1">
    <original>E</original>
    <variation>G</variation>
    <location>
        <position position="2284"/>
    </location>
</feature>
<feature type="sequence conflict" description="In Ref. 1; AAB00542." evidence="22" ref="1">
    <original>M</original>
    <variation>I</variation>
    <location>
        <position position="2297"/>
    </location>
</feature>
<feature type="sequence conflict" description="In Ref. 1; AAB00542." evidence="22" ref="1">
    <original>A</original>
    <variation>G</variation>
    <location>
        <position position="3531"/>
    </location>
</feature>
<feature type="sequence conflict" description="In Ref. 1; AAB00542." evidence="22" ref="1">
    <original>DAGEY</original>
    <variation>RRRRI</variation>
    <location>
        <begin position="3884"/>
        <end position="3888"/>
    </location>
</feature>
<feature type="sequence conflict" description="In Ref. 1; AAB00542." evidence="22" ref="1">
    <original>A</original>
    <variation>V</variation>
    <location>
        <position position="3929"/>
    </location>
</feature>
<feature type="sequence conflict" description="In Ref. 1; AAB00542." evidence="22" ref="1">
    <original>A</original>
    <variation>P</variation>
    <location>
        <position position="5134"/>
    </location>
</feature>
<feature type="sequence conflict" description="In Ref. 1; AAB00542." evidence="22" ref="1">
    <original>T</original>
    <variation>S</variation>
    <location>
        <position position="5145"/>
    </location>
</feature>
<feature type="sequence conflict" description="In Ref. 1; AAB00542." evidence="22" ref="1">
    <original>G</original>
    <variation>A</variation>
    <location>
        <position position="5185"/>
    </location>
</feature>
<feature type="sequence conflict" description="In Ref. 1; AAB00542." evidence="22" ref="1">
    <original>K</original>
    <variation>N</variation>
    <location>
        <position position="5199"/>
    </location>
</feature>
<feature type="sequence conflict" description="In Ref. 1; AAB00542." evidence="22" ref="1">
    <original>L</original>
    <variation>F</variation>
    <location>
        <position position="5202"/>
    </location>
</feature>
<feature type="sequence conflict" description="In Ref. 1; AAB00542." evidence="22" ref="1">
    <original>F</original>
    <variation>L</variation>
    <location>
        <position position="5213"/>
    </location>
</feature>
<feature type="sequence conflict" description="In Ref. 1; AAB00542." evidence="22" ref="1">
    <original>A</original>
    <variation>G</variation>
    <location>
        <position position="6178"/>
    </location>
</feature>
<feature type="sequence conflict" description="In Ref. 1; AAB00542." evidence="22" ref="1">
    <original>K</original>
    <variation>E</variation>
    <location>
        <position position="6268"/>
    </location>
</feature>
<feature type="strand" evidence="24">
    <location>
        <begin position="349"/>
        <end position="357"/>
    </location>
</feature>
<feature type="strand" evidence="24">
    <location>
        <begin position="365"/>
        <end position="372"/>
    </location>
</feature>
<feature type="strand" evidence="24">
    <location>
        <begin position="375"/>
        <end position="381"/>
    </location>
</feature>
<feature type="strand" evidence="24">
    <location>
        <begin position="384"/>
        <end position="387"/>
    </location>
</feature>
<feature type="strand" evidence="24">
    <location>
        <begin position="395"/>
        <end position="400"/>
    </location>
</feature>
<feature type="strand" evidence="24">
    <location>
        <begin position="402"/>
        <end position="406"/>
    </location>
</feature>
<feature type="strand" evidence="24">
    <location>
        <begin position="412"/>
        <end position="416"/>
    </location>
</feature>
<feature type="strand" evidence="24">
    <location>
        <begin position="431"/>
        <end position="434"/>
    </location>
</feature>
<feature type="helix" evidence="24">
    <location>
        <begin position="437"/>
        <end position="447"/>
    </location>
</feature>
<feature type="helix" evidence="24">
    <location>
        <begin position="451"/>
        <end position="454"/>
    </location>
</feature>
<evidence type="ECO:0000255" key="1">
    <source>
        <dbReference type="PROSITE-ProRule" id="PRU00062"/>
    </source>
</evidence>
<evidence type="ECO:0000255" key="2">
    <source>
        <dbReference type="PROSITE-ProRule" id="PRU00114"/>
    </source>
</evidence>
<evidence type="ECO:0000255" key="3">
    <source>
        <dbReference type="PROSITE-ProRule" id="PRU00145"/>
    </source>
</evidence>
<evidence type="ECO:0000255" key="4">
    <source>
        <dbReference type="PROSITE-ProRule" id="PRU00159"/>
    </source>
</evidence>
<evidence type="ECO:0000255" key="5">
    <source>
        <dbReference type="PROSITE-ProRule" id="PRU00192"/>
    </source>
</evidence>
<evidence type="ECO:0000255" key="6">
    <source>
        <dbReference type="PROSITE-ProRule" id="PRU00316"/>
    </source>
</evidence>
<evidence type="ECO:0000256" key="7">
    <source>
        <dbReference type="SAM" id="MobiDB-lite"/>
    </source>
</evidence>
<evidence type="ECO:0000269" key="8">
    <source>
    </source>
</evidence>
<evidence type="ECO:0000269" key="9">
    <source>
    </source>
</evidence>
<evidence type="ECO:0000269" key="10">
    <source>
    </source>
</evidence>
<evidence type="ECO:0000269" key="11">
    <source>
    </source>
</evidence>
<evidence type="ECO:0000269" key="12">
    <source>
    </source>
</evidence>
<evidence type="ECO:0000269" key="13">
    <source>
    </source>
</evidence>
<evidence type="ECO:0000269" key="14">
    <source>
    </source>
</evidence>
<evidence type="ECO:0000269" key="15">
    <source>
    </source>
</evidence>
<evidence type="ECO:0000269" key="16">
    <source>
    </source>
</evidence>
<evidence type="ECO:0000269" key="17">
    <source>
    </source>
</evidence>
<evidence type="ECO:0000269" key="18">
    <source>
    </source>
</evidence>
<evidence type="ECO:0000269" key="19">
    <source>
    </source>
</evidence>
<evidence type="ECO:0000269" key="20">
    <source>
    </source>
</evidence>
<evidence type="ECO:0000303" key="21">
    <source>
    </source>
</evidence>
<evidence type="ECO:0000305" key="22"/>
<evidence type="ECO:0000305" key="23">
    <source>
    </source>
</evidence>
<evidence type="ECO:0007829" key="24">
    <source>
        <dbReference type="PDB" id="1FHO"/>
    </source>
</evidence>
<reference evidence="22" key="1">
    <citation type="journal article" date="1996" name="J. Cell Biol.">
        <title>The Caenorhabditis elegans gene unc-89, required for muscle M-line assembly, encodes a giant modular protein composed of Ig and signal transduction domains.</title>
        <authorList>
            <person name="Benian G.M."/>
            <person name="Tinley T.L."/>
            <person name="Tang X."/>
            <person name="Borodovsky M."/>
        </authorList>
    </citation>
    <scope>NUCLEOTIDE SEQUENCE [GENOMIC DNA] (ISOFORM A)</scope>
    <scope>FUNCTION</scope>
    <scope>SUBCELLULAR LOCATION</scope>
    <scope>TISSUE SPECIFICITY</scope>
    <source>
        <strain>Bristol N2</strain>
    </source>
</reference>
<reference key="2">
    <citation type="journal article" date="1998" name="Science">
        <title>Genome sequence of the nematode C. elegans: a platform for investigating biology.</title>
        <authorList>
            <consortium name="The C. elegans sequencing consortium"/>
        </authorList>
    </citation>
    <scope>NUCLEOTIDE SEQUENCE [LARGE SCALE GENOMIC DNA]</scope>
    <scope>ALTERNATIVE SPLICING</scope>
    <source>
        <strain>Bristol N2</strain>
    </source>
</reference>
<reference key="3">
    <citation type="journal article" date="2004" name="J. Mol. Biol.">
        <title>Three new isoforms of Caenorhabditis elegans UNC-89 containing MLCK-like protein kinase domains.</title>
        <authorList>
            <person name="Small T.M."/>
            <person name="Gernert K.M."/>
            <person name="Flaherty D.B."/>
            <person name="Mercer K.B."/>
            <person name="Borodovsky M."/>
            <person name="Benian G.M."/>
        </authorList>
    </citation>
    <scope>NUCLEOTIDE SEQUENCE [MRNA] OF 5922-7990 (ISOFORMS B/F)</scope>
    <scope>ALTERNATIVE SPLICING</scope>
    <scope>FUNCTION</scope>
    <scope>SUBCELLULAR LOCATION</scope>
    <scope>TISSUE SPECIFICITY</scope>
    <scope>DEVELOPMENTAL STAGE</scope>
    <scope>DISRUPTION PHENOTYPE</scope>
    <source>
        <strain>Bristol N2</strain>
    </source>
</reference>
<reference key="4">
    <citation type="journal article" date="2005" name="J. Muscle Res. Cell Motil.">
        <title>Titin/connectin-related proteins in C. elegans: a review and new findings.</title>
        <authorList>
            <person name="Ferrara T.M."/>
            <person name="Flaherty D.B."/>
            <person name="Benian G.M."/>
        </authorList>
    </citation>
    <scope>FUNCTION</scope>
    <scope>DOMAIN</scope>
    <scope>DISRUPTION PHENOTYPE</scope>
</reference>
<reference key="5">
    <citation type="journal article" date="2007" name="Dev. Dyn.">
        <title>Structural components of the nonstriated contractile apparatuses in the Caenorhabditis elegans gonadal myoepithelial sheath and their essential roles for ovulation.</title>
        <authorList>
            <person name="Ono K."/>
            <person name="Yu R."/>
            <person name="Ono S."/>
        </authorList>
    </citation>
    <scope>SUBCELLULAR LOCATION</scope>
    <scope>TISSUE SPECIFICITY</scope>
    <scope>DISRUPTION PHENOTYPE</scope>
</reference>
<reference key="6">
    <citation type="journal article" date="2008" name="J. Mol. Biol.">
        <title>The DH-PH region of the giant protein UNC-89 activates RHO-1 GTPase in Caenorhabditis elegans body wall muscle.</title>
        <authorList>
            <person name="Qadota H."/>
            <person name="Blangy A."/>
            <person name="Xiong G."/>
            <person name="Benian G.M."/>
        </authorList>
    </citation>
    <scope>FUNCTION</scope>
    <scope>INTERACTION WITH RHO-1; CED-10; MIG-2 AND CDC-42</scope>
    <scope>DISRUPTION PHENOTYPE</scope>
</reference>
<reference key="7">
    <citation type="journal article" date="2008" name="Mol. Biol. Cell">
        <title>A novel protein phosphatase is a binding partner for the protein kinase domains of UNC-89 (Obscurin) in Caenorhabditis elegans.</title>
        <authorList>
            <person name="Qadota H."/>
            <person name="McGaha L.A."/>
            <person name="Mercer K.B."/>
            <person name="Stark T.J."/>
            <person name="Ferrara T.M."/>
            <person name="Benian G.M."/>
        </authorList>
    </citation>
    <scope>INTERACTION WITH SCPL-1</scope>
    <scope>SUBCELLULAR LOCATION</scope>
    <scope>TISSUE SPECIFICITY</scope>
</reference>
<reference key="8">
    <citation type="journal article" date="2009" name="J. Mol. Biol.">
        <title>A LIM-9 (FHL)/SCPL-1 (SCP) complex interacts with the C-terminal protein kinase regions of UNC-89 (obscurin) in Caenorhabditis elegans muscle.</title>
        <authorList>
            <person name="Xiong G."/>
            <person name="Qadota H."/>
            <person name="Mercer K.B."/>
            <person name="McGaha L.A."/>
            <person name="Oberhauser A.F."/>
            <person name="Benian G.M."/>
        </authorList>
    </citation>
    <scope>INTERACTION WITH LIM-9</scope>
    <scope>SUBCELLULAR LOCATION</scope>
    <scope>TISSUE SPECIFICITY</scope>
</reference>
<reference key="9">
    <citation type="journal article" date="2011" name="Genetics">
        <title>Cell architecture: surrounding muscle cells shape gland cell morphology in the Caenorhabditis elegans pharynx.</title>
        <authorList>
            <person name="Raharjo W.H."/>
            <person name="Ghai V."/>
            <person name="Dineen A."/>
            <person name="Bastiani M."/>
            <person name="Gaudet J."/>
        </authorList>
    </citation>
    <scope>FUNCTION</scope>
</reference>
<reference key="10">
    <citation type="journal article" date="2012" name="Mol. Biol. Cell">
        <title>UNC-89 (obscurin) binds to MEL-26, a BTB-domain protein, and affects the function of MEI-1 (katanin) in striated muscle of Caenorhabditis elegans.</title>
        <authorList>
            <person name="Wilson K.J."/>
            <person name="Qadota H."/>
            <person name="Mains P.E."/>
            <person name="Benian G.M."/>
        </authorList>
    </citation>
    <scope>FUNCTION</scope>
    <scope>INTERACTION WITH MEL-26</scope>
    <scope>SUBCELLULAR LOCATION</scope>
    <scope>TISSUE SPECIFICITY</scope>
    <scope>DISRUPTION PHENOTYPE</scope>
</reference>
<reference key="11">
    <citation type="journal article" date="2012" name="PLoS ONE">
        <title>Large isoforms of UNC-89 (obscurin) are required for muscle cell architecture and optimal calcium release in Caenorhabditis elegans.</title>
        <authorList>
            <person name="Spooner P.M."/>
            <person name="Bonner J."/>
            <person name="Maricq A.V."/>
            <person name="Benian G.M."/>
            <person name="Norman K.R."/>
        </authorList>
    </citation>
    <scope>FUNCTION</scope>
    <scope>SUBCELLULAR LOCATION</scope>
    <scope>TISSUE SPECIFICITY</scope>
    <scope>DISRUPTION PHENOTYPE</scope>
</reference>
<reference key="12">
    <citation type="journal article" date="2013" name="Mol. Biol. Cell">
        <title>CPNA-1, a copine domain protein, is located at integrin adhesion sites and is required for myofilament stability in Caenorhabditis elegans.</title>
        <authorList>
            <person name="Warner A."/>
            <person name="Xiong G."/>
            <person name="Qadota H."/>
            <person name="Rogalski T."/>
            <person name="Vogl A.W."/>
            <person name="Moerman D.G."/>
            <person name="Benian G.M."/>
        </authorList>
    </citation>
    <scope>FUNCTION</scope>
    <scope>INTERACTION WITH CPNA-1</scope>
    <scope>SUBCELLULAR LOCATION</scope>
    <scope>TISSUE SPECIFICITY</scope>
    <scope>DEVELOPMENTAL STAGE</scope>
</reference>
<reference key="13">
    <citation type="journal article" date="2016" name="Mol. Biol. Cell">
        <title>The SH3 domain of UNC-89 (obscurin) interacts with paramyosin, a coiled-coil protein, in Caenorhabditis elegans muscle.</title>
        <authorList>
            <person name="Qadota H."/>
            <person name="Mayans O."/>
            <person name="Matsunaga Y."/>
            <person name="McMurry J.L."/>
            <person name="Wilson K.J."/>
            <person name="Kwon G.E."/>
            <person name="Stanford R."/>
            <person name="Deehan K."/>
            <person name="Tinley T.L."/>
            <person name="Ngwa V.M."/>
            <person name="Benian G.M."/>
        </authorList>
    </citation>
    <scope>FUNCTION</scope>
    <scope>INTERACTION WITH UNC-15</scope>
    <scope>SUBCELLULAR LOCATION</scope>
    <scope>TISSUE SPECIFICITY</scope>
    <scope>DOMAIN</scope>
    <scope>DISRUPTION PHENOTYPE</scope>
</reference>
<reference key="14">
    <citation type="journal article" date="2000" name="Structure">
        <title>Structure of a PH domain from the C. elegans muscle protein UNC-89 suggests a novel function.</title>
        <authorList>
            <person name="Blomberg N."/>
            <person name="Baraldi E."/>
            <person name="Sattler M."/>
            <person name="Saraste M."/>
            <person name="Nilges M."/>
        </authorList>
    </citation>
    <scope>STRUCTURE BY NMR OF 341-458</scope>
    <scope>DOMAIN</scope>
</reference>
<dbReference type="EMBL" id="U33058">
    <property type="protein sequence ID" value="AAB00542.1"/>
    <property type="molecule type" value="Genomic_DNA"/>
</dbReference>
<dbReference type="EMBL" id="FO080458">
    <property type="protein sequence ID" value="CCD63864.1"/>
    <property type="molecule type" value="Genomic_DNA"/>
</dbReference>
<dbReference type="EMBL" id="FO080458">
    <property type="protein sequence ID" value="CCD63865.1"/>
    <property type="molecule type" value="Genomic_DNA"/>
</dbReference>
<dbReference type="EMBL" id="FO080458">
    <property type="protein sequence ID" value="CCD63866.1"/>
    <property type="molecule type" value="Genomic_DNA"/>
</dbReference>
<dbReference type="EMBL" id="FO080458">
    <property type="protein sequence ID" value="CCD63867.1"/>
    <property type="molecule type" value="Genomic_DNA"/>
</dbReference>
<dbReference type="EMBL" id="FO080458">
    <property type="protein sequence ID" value="CCD63868.1"/>
    <property type="molecule type" value="Genomic_DNA"/>
</dbReference>
<dbReference type="EMBL" id="FO080458">
    <property type="protein sequence ID" value="CCD63869.1"/>
    <property type="molecule type" value="Genomic_DNA"/>
</dbReference>
<dbReference type="EMBL" id="FO080458">
    <property type="protein sequence ID" value="CCD63870.1"/>
    <property type="molecule type" value="Genomic_DNA"/>
</dbReference>
<dbReference type="EMBL" id="AY724774">
    <property type="protein sequence ID" value="AAU21474.1"/>
    <property type="molecule type" value="mRNA"/>
</dbReference>
<dbReference type="EMBL" id="AY714779">
    <property type="protein sequence ID" value="AAU14146.1"/>
    <property type="molecule type" value="mRNA"/>
</dbReference>
<dbReference type="PIR" id="T29757">
    <property type="entry name" value="T29757"/>
</dbReference>
<dbReference type="RefSeq" id="NP_001020984.1">
    <molecule id="O01761-2"/>
    <property type="nucleotide sequence ID" value="NM_001025813.2"/>
</dbReference>
<dbReference type="RefSeq" id="NP_001020985.1">
    <molecule id="O01761-1"/>
    <property type="nucleotide sequence ID" value="NM_001025814.4"/>
</dbReference>
<dbReference type="RefSeq" id="NP_001020988.1">
    <molecule id="O01761-5"/>
    <property type="nucleotide sequence ID" value="NM_001025817.4"/>
</dbReference>
<dbReference type="RefSeq" id="NP_001020989.1">
    <molecule id="O01761-6"/>
    <property type="nucleotide sequence ID" value="NM_001025818.3"/>
</dbReference>
<dbReference type="RefSeq" id="NP_001020990.1">
    <property type="nucleotide sequence ID" value="NM_001025819.1"/>
</dbReference>
<dbReference type="RefSeq" id="NP_001293453.1">
    <molecule id="O01761-3"/>
    <property type="nucleotide sequence ID" value="NM_001306524.2"/>
</dbReference>
<dbReference type="RefSeq" id="NP_001293454.1">
    <molecule id="O01761-4"/>
    <property type="nucleotide sequence ID" value="NM_001306525.3"/>
</dbReference>
<dbReference type="PDB" id="1FHO">
    <property type="method" value="NMR"/>
    <property type="chains" value="A=341-458"/>
</dbReference>
<dbReference type="PDBsum" id="1FHO"/>
<dbReference type="BMRB" id="O01761"/>
<dbReference type="SMR" id="O01761"/>
<dbReference type="BioGRID" id="37462">
    <property type="interactions" value="42"/>
</dbReference>
<dbReference type="FunCoup" id="O01761">
    <property type="interactions" value="108"/>
</dbReference>
<dbReference type="IntAct" id="O01761">
    <property type="interactions" value="11"/>
</dbReference>
<dbReference type="STRING" id="6239.C09D1.1b.1"/>
<dbReference type="iPTMnet" id="O01761"/>
<dbReference type="PaxDb" id="6239-C09D1.1b"/>
<dbReference type="PeptideAtlas" id="O01761"/>
<dbReference type="EnsemblMetazoa" id="C09D1.1a.1">
    <molecule id="O01761-2"/>
    <property type="protein sequence ID" value="C09D1.1a.1"/>
    <property type="gene ID" value="WBGene00006820"/>
</dbReference>
<dbReference type="EnsemblMetazoa" id="C09D1.1b.1">
    <molecule id="O01761-1"/>
    <property type="protein sequence ID" value="C09D1.1b.1"/>
    <property type="gene ID" value="WBGene00006820"/>
</dbReference>
<dbReference type="EnsemblMetazoa" id="C09D1.1c.1">
    <molecule id="O01761-3"/>
    <property type="protein sequence ID" value="C09D1.1c.1"/>
    <property type="gene ID" value="WBGene00006820"/>
</dbReference>
<dbReference type="EnsemblMetazoa" id="C09D1.1d.1">
    <molecule id="O01761-4"/>
    <property type="protein sequence ID" value="C09D1.1d.1"/>
    <property type="gene ID" value="WBGene00006820"/>
</dbReference>
<dbReference type="EnsemblMetazoa" id="C09D1.1e.1">
    <molecule id="O01761-5"/>
    <property type="protein sequence ID" value="C09D1.1e.1"/>
    <property type="gene ID" value="WBGene00006820"/>
</dbReference>
<dbReference type="EnsemblMetazoa" id="C09D1.1f.1">
    <molecule id="O01761-6"/>
    <property type="protein sequence ID" value="C09D1.1f.1"/>
    <property type="gene ID" value="WBGene00006820"/>
</dbReference>
<dbReference type="EnsemblMetazoa" id="C09D1.1g.1">
    <property type="protein sequence ID" value="C09D1.1g.1"/>
    <property type="gene ID" value="WBGene00006820"/>
</dbReference>
<dbReference type="GeneID" id="171990"/>
<dbReference type="KEGG" id="cel:CELE_C09D1.1"/>
<dbReference type="UCSC" id="C09D1.1g">
    <molecule id="O01761-1"/>
    <property type="organism name" value="c. elegans"/>
</dbReference>
<dbReference type="AGR" id="WB:WBGene00006820"/>
<dbReference type="CTD" id="171990"/>
<dbReference type="WormBase" id="C09D1.1a">
    <molecule id="O01761-2"/>
    <property type="protein sequence ID" value="CE30426"/>
    <property type="gene ID" value="WBGene00006820"/>
    <property type="gene designation" value="unc-89"/>
</dbReference>
<dbReference type="WormBase" id="C09D1.1b">
    <molecule id="O01761-1"/>
    <property type="protein sequence ID" value="CE34251"/>
    <property type="gene ID" value="WBGene00006820"/>
    <property type="gene designation" value="unc-89"/>
</dbReference>
<dbReference type="WormBase" id="C09D1.1c">
    <molecule id="O01761-3"/>
    <property type="protein sequence ID" value="CE34252"/>
    <property type="gene ID" value="WBGene00006820"/>
    <property type="gene designation" value="unc-89"/>
</dbReference>
<dbReference type="WormBase" id="C09D1.1d">
    <molecule id="O01761-4"/>
    <property type="protein sequence ID" value="CE37701"/>
    <property type="gene ID" value="WBGene00006820"/>
    <property type="gene designation" value="unc-89"/>
</dbReference>
<dbReference type="WormBase" id="C09D1.1e">
    <molecule id="O01761-5"/>
    <property type="protein sequence ID" value="CE37702"/>
    <property type="gene ID" value="WBGene00006820"/>
    <property type="gene designation" value="unc-89"/>
</dbReference>
<dbReference type="WormBase" id="C09D1.1f">
    <molecule id="O01761-6"/>
    <property type="protein sequence ID" value="CE37703"/>
    <property type="gene ID" value="WBGene00006820"/>
    <property type="gene designation" value="unc-89"/>
</dbReference>
<dbReference type="WormBase" id="C09D1.1g">
    <molecule id="O01761-7"/>
    <property type="protein sequence ID" value="CE52389"/>
    <property type="gene ID" value="WBGene00006820"/>
    <property type="gene designation" value="unc-89"/>
</dbReference>
<dbReference type="eggNOG" id="KOG0032">
    <property type="taxonomic scope" value="Eukaryota"/>
</dbReference>
<dbReference type="eggNOG" id="KOG0689">
    <property type="taxonomic scope" value="Eukaryota"/>
</dbReference>
<dbReference type="eggNOG" id="KOG4475">
    <property type="taxonomic scope" value="Eukaryota"/>
</dbReference>
<dbReference type="GeneTree" id="ENSGT00940000171516"/>
<dbReference type="InParanoid" id="O01761"/>
<dbReference type="OMA" id="FPSIHWM"/>
<dbReference type="OrthoDB" id="5969272at2759"/>
<dbReference type="PhylomeDB" id="O01761"/>
<dbReference type="Reactome" id="R-CEL-8849932">
    <property type="pathway name" value="Synaptic adhesion-like molecules"/>
</dbReference>
<dbReference type="EvolutionaryTrace" id="O01761"/>
<dbReference type="PRO" id="PR:O01761"/>
<dbReference type="Proteomes" id="UP000001940">
    <property type="component" value="Chromosome I"/>
</dbReference>
<dbReference type="Bgee" id="WBGene00006820">
    <property type="expression patterns" value="Expressed in larva and 3 other cell types or tissues"/>
</dbReference>
<dbReference type="ExpressionAtlas" id="O01761">
    <property type="expression patterns" value="baseline and differential"/>
</dbReference>
<dbReference type="GO" id="GO:0031672">
    <property type="term" value="C:A band"/>
    <property type="evidence" value="ECO:0000314"/>
    <property type="project" value="WormBase"/>
</dbReference>
<dbReference type="GO" id="GO:0031430">
    <property type="term" value="C:M band"/>
    <property type="evidence" value="ECO:0000314"/>
    <property type="project" value="UniProtKB"/>
</dbReference>
<dbReference type="GO" id="GO:0005524">
    <property type="term" value="F:ATP binding"/>
    <property type="evidence" value="ECO:0007669"/>
    <property type="project" value="InterPro"/>
</dbReference>
<dbReference type="GO" id="GO:0005085">
    <property type="term" value="F:guanyl-nucleotide exchange factor activity"/>
    <property type="evidence" value="ECO:0000314"/>
    <property type="project" value="WormBase"/>
</dbReference>
<dbReference type="GO" id="GO:0090736">
    <property type="term" value="F:MATH domain binding"/>
    <property type="evidence" value="ECO:0000353"/>
    <property type="project" value="UniProtKB"/>
</dbReference>
<dbReference type="GO" id="GO:0019902">
    <property type="term" value="F:phosphatase binding"/>
    <property type="evidence" value="ECO:0000353"/>
    <property type="project" value="WormBase"/>
</dbReference>
<dbReference type="GO" id="GO:0004672">
    <property type="term" value="F:protein kinase activity"/>
    <property type="evidence" value="ECO:0007669"/>
    <property type="project" value="InterPro"/>
</dbReference>
<dbReference type="GO" id="GO:0031267">
    <property type="term" value="F:small GTPase binding"/>
    <property type="evidence" value="ECO:0000353"/>
    <property type="project" value="WormBase"/>
</dbReference>
<dbReference type="GO" id="GO:0031034">
    <property type="term" value="P:myosin filament assembly"/>
    <property type="evidence" value="ECO:0000315"/>
    <property type="project" value="WormBase"/>
</dbReference>
<dbReference type="GO" id="GO:1905905">
    <property type="term" value="P:nematode pharyngeal gland morphogenesis"/>
    <property type="evidence" value="ECO:0000315"/>
    <property type="project" value="UniProtKB"/>
</dbReference>
<dbReference type="GO" id="GO:0010628">
    <property type="term" value="P:positive regulation of gene expression"/>
    <property type="evidence" value="ECO:0000315"/>
    <property type="project" value="UniProtKB"/>
</dbReference>
<dbReference type="GO" id="GO:0040017">
    <property type="term" value="P:positive regulation of locomotion"/>
    <property type="evidence" value="ECO:0000316"/>
    <property type="project" value="UniProtKB"/>
</dbReference>
<dbReference type="GO" id="GO:1905552">
    <property type="term" value="P:positive regulation of protein localization to endoplasmic reticulum"/>
    <property type="evidence" value="ECO:0000316"/>
    <property type="project" value="UniProtKB"/>
</dbReference>
<dbReference type="GO" id="GO:0060298">
    <property type="term" value="P:positive regulation of sarcomere organization"/>
    <property type="evidence" value="ECO:0000316"/>
    <property type="project" value="UniProtKB"/>
</dbReference>
<dbReference type="GO" id="GO:0045989">
    <property type="term" value="P:positive regulation of striated muscle contraction"/>
    <property type="evidence" value="ECO:0000316"/>
    <property type="project" value="UniProtKB"/>
</dbReference>
<dbReference type="GO" id="GO:0008104">
    <property type="term" value="P:protein localization"/>
    <property type="evidence" value="ECO:0000314"/>
    <property type="project" value="UniProtKB"/>
</dbReference>
<dbReference type="GO" id="GO:0014722">
    <property type="term" value="P:regulation of skeletal muscle contraction by calcium ion signaling"/>
    <property type="evidence" value="ECO:0000316"/>
    <property type="project" value="UniProtKB"/>
</dbReference>
<dbReference type="GO" id="GO:0045214">
    <property type="term" value="P:sarcomere organization"/>
    <property type="evidence" value="ECO:0000316"/>
    <property type="project" value="UniProtKB"/>
</dbReference>
<dbReference type="GO" id="GO:0030241">
    <property type="term" value="P:skeletal muscle myosin thick filament assembly"/>
    <property type="evidence" value="ECO:0000315"/>
    <property type="project" value="WormBase"/>
</dbReference>
<dbReference type="GO" id="GO:0071688">
    <property type="term" value="P:striated muscle myosin thick filament assembly"/>
    <property type="evidence" value="ECO:0000315"/>
    <property type="project" value="UniProtKB"/>
</dbReference>
<dbReference type="CDD" id="cd00063">
    <property type="entry name" value="FN3"/>
    <property type="match status" value="2"/>
</dbReference>
<dbReference type="CDD" id="cd00096">
    <property type="entry name" value="Ig"/>
    <property type="match status" value="3"/>
</dbReference>
<dbReference type="CDD" id="cd20973">
    <property type="entry name" value="IgI_telokin-like"/>
    <property type="match status" value="1"/>
</dbReference>
<dbReference type="CDD" id="cd13325">
    <property type="entry name" value="PH_unc89"/>
    <property type="match status" value="1"/>
</dbReference>
<dbReference type="CDD" id="cd14109">
    <property type="entry name" value="PK_Unc-89_rpt1"/>
    <property type="match status" value="1"/>
</dbReference>
<dbReference type="CDD" id="cd00160">
    <property type="entry name" value="RhoGEF"/>
    <property type="match status" value="1"/>
</dbReference>
<dbReference type="CDD" id="cd14112">
    <property type="entry name" value="STKc_Unc-89_rpt2"/>
    <property type="match status" value="1"/>
</dbReference>
<dbReference type="FunFam" id="1.10.510.10:FF:000902">
    <property type="entry name" value="Muscle M-line assembly protein unc-89"/>
    <property type="match status" value="1"/>
</dbReference>
<dbReference type="FunFam" id="1.20.900.10:FF:000064">
    <property type="entry name" value="Muscle M-line assembly protein unc-89"/>
    <property type="match status" value="1"/>
</dbReference>
<dbReference type="FunFam" id="2.60.40.10:FF:000344">
    <property type="entry name" value="Muscle M-line assembly protein unc-89"/>
    <property type="match status" value="6"/>
</dbReference>
<dbReference type="FunFam" id="2.60.40.10:FF:000345">
    <property type="entry name" value="Muscle M-line assembly protein unc-89"/>
    <property type="match status" value="7"/>
</dbReference>
<dbReference type="FunFam" id="2.60.40.10:FF:000507">
    <property type="entry name" value="Muscle M-line assembly protein unc-89"/>
    <property type="match status" value="4"/>
</dbReference>
<dbReference type="FunFam" id="2.60.40.10:FF:000519">
    <property type="entry name" value="Muscle M-line assembly protein unc-89"/>
    <property type="match status" value="1"/>
</dbReference>
<dbReference type="FunFam" id="2.60.40.10:FF:001409">
    <property type="entry name" value="Muscle M-line assembly protein unc-89"/>
    <property type="match status" value="1"/>
</dbReference>
<dbReference type="FunFam" id="2.60.40.10:FF:001436">
    <property type="entry name" value="Muscle M-line assembly protein unc-89"/>
    <property type="match status" value="1"/>
</dbReference>
<dbReference type="FunFam" id="2.60.40.10:FF:002188">
    <property type="entry name" value="Muscle M-line assembly protein unc-89"/>
    <property type="match status" value="1"/>
</dbReference>
<dbReference type="FunFam" id="2.60.40.10:FF:002248">
    <property type="entry name" value="Muscle M-line assembly protein unc-89"/>
    <property type="match status" value="1"/>
</dbReference>
<dbReference type="FunFam" id="2.60.40.10:FF:002469">
    <property type="entry name" value="Muscle M-line assembly protein unc-89"/>
    <property type="match status" value="1"/>
</dbReference>
<dbReference type="FunFam" id="2.60.40.10:FF:000425">
    <property type="entry name" value="Myosin light chain kinase"/>
    <property type="match status" value="3"/>
</dbReference>
<dbReference type="FunFam" id="2.60.40.10:FF:000080">
    <property type="entry name" value="Myosin light chain kinase, smooth muscle"/>
    <property type="match status" value="1"/>
</dbReference>
<dbReference type="FunFam" id="2.60.40.10:FF:000107">
    <property type="entry name" value="Myosin, light chain kinase a"/>
    <property type="match status" value="12"/>
</dbReference>
<dbReference type="FunFam" id="2.60.40.10:FF:000032">
    <property type="entry name" value="palladin isoform X1"/>
    <property type="match status" value="5"/>
</dbReference>
<dbReference type="FunFam" id="2.60.40.10:FF:001223">
    <property type="entry name" value="Sidekick cell adhesion molecule 1"/>
    <property type="match status" value="1"/>
</dbReference>
<dbReference type="Gene3D" id="1.20.900.10">
    <property type="entry name" value="Dbl homology (DH) domain"/>
    <property type="match status" value="1"/>
</dbReference>
<dbReference type="Gene3D" id="2.60.40.10">
    <property type="entry name" value="Immunoglobulins"/>
    <property type="match status" value="55"/>
</dbReference>
<dbReference type="Gene3D" id="2.30.29.30">
    <property type="entry name" value="Pleckstrin-homology domain (PH domain)/Phosphotyrosine-binding domain (PTB)"/>
    <property type="match status" value="1"/>
</dbReference>
<dbReference type="Gene3D" id="2.30.30.40">
    <property type="entry name" value="SH3 Domains"/>
    <property type="match status" value="1"/>
</dbReference>
<dbReference type="Gene3D" id="1.10.510.10">
    <property type="entry name" value="Transferase(Phosphotransferase) domain 1"/>
    <property type="match status" value="2"/>
</dbReference>
<dbReference type="InterPro" id="IPR035899">
    <property type="entry name" value="DBL_dom_sf"/>
</dbReference>
<dbReference type="InterPro" id="IPR000219">
    <property type="entry name" value="DH_dom"/>
</dbReference>
<dbReference type="InterPro" id="IPR003961">
    <property type="entry name" value="FN3_dom"/>
</dbReference>
<dbReference type="InterPro" id="IPR036116">
    <property type="entry name" value="FN3_sf"/>
</dbReference>
<dbReference type="InterPro" id="IPR007110">
    <property type="entry name" value="Ig-like_dom"/>
</dbReference>
<dbReference type="InterPro" id="IPR036179">
    <property type="entry name" value="Ig-like_dom_sf"/>
</dbReference>
<dbReference type="InterPro" id="IPR013783">
    <property type="entry name" value="Ig-like_fold"/>
</dbReference>
<dbReference type="InterPro" id="IPR013098">
    <property type="entry name" value="Ig_I-set"/>
</dbReference>
<dbReference type="InterPro" id="IPR003599">
    <property type="entry name" value="Ig_sub"/>
</dbReference>
<dbReference type="InterPro" id="IPR003598">
    <property type="entry name" value="Ig_sub2"/>
</dbReference>
<dbReference type="InterPro" id="IPR013106">
    <property type="entry name" value="Ig_V-set"/>
</dbReference>
<dbReference type="InterPro" id="IPR011009">
    <property type="entry name" value="Kinase-like_dom_sf"/>
</dbReference>
<dbReference type="InterPro" id="IPR011993">
    <property type="entry name" value="PH-like_dom_sf"/>
</dbReference>
<dbReference type="InterPro" id="IPR001849">
    <property type="entry name" value="PH_domain"/>
</dbReference>
<dbReference type="InterPro" id="IPR000719">
    <property type="entry name" value="Prot_kinase_dom"/>
</dbReference>
<dbReference type="InterPro" id="IPR007850">
    <property type="entry name" value="RCSD"/>
</dbReference>
<dbReference type="InterPro" id="IPR036028">
    <property type="entry name" value="SH3-like_dom_sf"/>
</dbReference>
<dbReference type="InterPro" id="IPR001452">
    <property type="entry name" value="SH3_domain"/>
</dbReference>
<dbReference type="InterPro" id="IPR055251">
    <property type="entry name" value="SOS1_NGEF_PH"/>
</dbReference>
<dbReference type="PANTHER" id="PTHR47633:SF16">
    <property type="entry name" value="CAVP-TARGET PROTEIN-LIKE"/>
    <property type="match status" value="1"/>
</dbReference>
<dbReference type="PANTHER" id="PTHR47633">
    <property type="entry name" value="IMMUNOGLOBULIN"/>
    <property type="match status" value="1"/>
</dbReference>
<dbReference type="Pfam" id="PF00041">
    <property type="entry name" value="fn3"/>
    <property type="match status" value="2"/>
</dbReference>
<dbReference type="Pfam" id="PF07679">
    <property type="entry name" value="I-set"/>
    <property type="match status" value="52"/>
</dbReference>
<dbReference type="Pfam" id="PF00069">
    <property type="entry name" value="Pkinase"/>
    <property type="match status" value="2"/>
</dbReference>
<dbReference type="Pfam" id="PF05177">
    <property type="entry name" value="RCSD"/>
    <property type="match status" value="5"/>
</dbReference>
<dbReference type="Pfam" id="PF00621">
    <property type="entry name" value="RhoGEF"/>
    <property type="match status" value="1"/>
</dbReference>
<dbReference type="Pfam" id="PF22697">
    <property type="entry name" value="SOS1_NGEF_PH"/>
    <property type="match status" value="1"/>
</dbReference>
<dbReference type="PRINTS" id="PR01832">
    <property type="entry name" value="VEGFRECEPTOR"/>
</dbReference>
<dbReference type="SMART" id="SM00060">
    <property type="entry name" value="FN3"/>
    <property type="match status" value="2"/>
</dbReference>
<dbReference type="SMART" id="SM00409">
    <property type="entry name" value="IG"/>
    <property type="match status" value="51"/>
</dbReference>
<dbReference type="SMART" id="SM00408">
    <property type="entry name" value="IGc2"/>
    <property type="match status" value="45"/>
</dbReference>
<dbReference type="SMART" id="SM00406">
    <property type="entry name" value="IGv"/>
    <property type="match status" value="5"/>
</dbReference>
<dbReference type="SMART" id="SM00233">
    <property type="entry name" value="PH"/>
    <property type="match status" value="1"/>
</dbReference>
<dbReference type="SMART" id="SM00325">
    <property type="entry name" value="RhoGEF"/>
    <property type="match status" value="1"/>
</dbReference>
<dbReference type="SMART" id="SM00326">
    <property type="entry name" value="SH3"/>
    <property type="match status" value="1"/>
</dbReference>
<dbReference type="SUPFAM" id="SSF48065">
    <property type="entry name" value="DBL homology domain (DH-domain)"/>
    <property type="match status" value="1"/>
</dbReference>
<dbReference type="SUPFAM" id="SSF49265">
    <property type="entry name" value="Fibronectin type III"/>
    <property type="match status" value="2"/>
</dbReference>
<dbReference type="SUPFAM" id="SSF48726">
    <property type="entry name" value="Immunoglobulin"/>
    <property type="match status" value="53"/>
</dbReference>
<dbReference type="SUPFAM" id="SSF50729">
    <property type="entry name" value="PH domain-like"/>
    <property type="match status" value="1"/>
</dbReference>
<dbReference type="SUPFAM" id="SSF56112">
    <property type="entry name" value="Protein kinase-like (PK-like)"/>
    <property type="match status" value="2"/>
</dbReference>
<dbReference type="SUPFAM" id="SSF50044">
    <property type="entry name" value="SH3-domain"/>
    <property type="match status" value="1"/>
</dbReference>
<dbReference type="PROSITE" id="PS50010">
    <property type="entry name" value="DH_2"/>
    <property type="match status" value="1"/>
</dbReference>
<dbReference type="PROSITE" id="PS50853">
    <property type="entry name" value="FN3"/>
    <property type="match status" value="2"/>
</dbReference>
<dbReference type="PROSITE" id="PS50835">
    <property type="entry name" value="IG_LIKE"/>
    <property type="match status" value="50"/>
</dbReference>
<dbReference type="PROSITE" id="PS50003">
    <property type="entry name" value="PH_DOMAIN"/>
    <property type="match status" value="1"/>
</dbReference>
<dbReference type="PROSITE" id="PS50011">
    <property type="entry name" value="PROTEIN_KINASE_DOM"/>
    <property type="match status" value="2"/>
</dbReference>
<dbReference type="PROSITE" id="PS50002">
    <property type="entry name" value="SH3"/>
    <property type="match status" value="1"/>
</dbReference>